<gene>
    <name type="primary">BICDL1</name>
    <name type="synonym">BICDR1</name>
    <name type="synonym">CCDC64</name>
</gene>
<accession>Q6ZP65</accession>
<accession>A8MUC8</accession>
<accession>B4DWL0</accession>
<accession>B5MDJ0</accession>
<accession>O95000</accession>
<comment type="function">
    <text evidence="1">Acts as an adapter protein linking the dynein motor complex to various cargos and converts dynein from a non-processive to a highly processive motor in the presence of dynactin. Facilitates the interaction between dynein and dynactin and activates dynein processivity (the ability to move along a microtubule for a long distance without falling off the track). Predominantly recruits 2 dyneins, which increases both the force and speed of the microtubule motor. Component of secretory vesicle machinery in developing neurons that acts as a regulator of neurite outgrowth. Regulates the secretory vesicle transport by controlling the accumulation of Rab6-containing secretory vesicles in the pericentrosomal region restricting anterograde secretory transport during the early phase of neuronal differentiation, thereby inhibiting neuritogenesis.</text>
</comment>
<comment type="subunit">
    <text evidence="1">Part of a tripartite complex with dynein and dynactin, acts an adapter linking the dynein motor complex and dynactin. Interacts with KIF1C. Interacts with RAB6A and RAB6B; interaction is specific to Rab6.</text>
</comment>
<comment type="subcellular location">
    <subcellularLocation>
        <location evidence="1">Cytoplasm</location>
        <location evidence="1">Cytoskeleton</location>
    </subcellularLocation>
    <subcellularLocation>
        <location evidence="1">Cytoplasm</location>
        <location evidence="1">Cytoskeleton</location>
        <location evidence="1">Microtubule organizing center</location>
        <location evidence="1">Centrosome</location>
    </subcellularLocation>
    <text evidence="1">Localizes around the centrosome.</text>
</comment>
<comment type="alternative products">
    <event type="alternative splicing"/>
    <isoform>
        <id>Q6ZP65-1</id>
        <name>1</name>
        <sequence type="displayed"/>
    </isoform>
    <isoform>
        <id>Q6ZP65-2</id>
        <name>2</name>
        <sequence type="described" ref="VSP_056941 VSP_056942"/>
    </isoform>
</comment>
<comment type="similarity">
    <text evidence="5">Belongs to the BICDR family.</text>
</comment>
<comment type="sequence caution" evidence="5">
    <conflict type="erroneous gene model prediction">
        <sequence resource="EMBL-CDS" id="AAC83181"/>
    </conflict>
</comment>
<comment type="sequence caution" evidence="5">
    <conflict type="miscellaneous discrepancy">
        <sequence resource="EMBL-CDS" id="BAC85259"/>
    </conflict>
    <text>Aberrant splicing.</text>
</comment>
<sequence length="573" mass="64841">MSAFCLGLVGRASAPAEPDSACCMELPAAAGDAVRSPAAAAALIFPGGSGELELALEEELALLAAGERPSDPGEHPQAEPGSLAEGAGPQPPPSQDPELLSVIRQKEKDLVLAARLGKALLERNQDMSRQYEQMHKELTDKLEHLEQEKHELRRRFENREGEWEGRVSELESDVKQLQDELERQQIHLREADREKSRAVQELSEQNQRLLDQLSRASEVERQLSMQVHALREDFREKNSSTNQHIIRLESLQAEIKMLSDRKRELEHRLSATLEENDLLQGTVEELQDRVLILERQGHDKDLQLHQSQLELQEVRLSCRQLQVKVEELTEERSLQSSAATSTSLLSEIEQSMEAEELEQEREQLRLQLWEAYCQVRYLCSHLRGNDSADSAVSTDSSMDESSETSSAKDVPAGSLRTALNELKRLIQSIVDGMEPTVTLLSVEMTALKEERDRLRVTSEDKEPKEQLQKAIRDRDEAIAKKNAVELELAKCRMDMMSLNSQLLDAIQQKLNLSQQLEAWQDDMHRVIDRQLMDTHLKERSQPAAALCRGHSAGRGDEPSIAEGKRLFSFFRKI</sequence>
<dbReference type="EMBL" id="AK129960">
    <property type="protein sequence ID" value="BAC85259.1"/>
    <property type="status" value="ALT_SEQ"/>
    <property type="molecule type" value="mRNA"/>
</dbReference>
<dbReference type="EMBL" id="AK301580">
    <property type="protein sequence ID" value="BAG63072.1"/>
    <property type="molecule type" value="mRNA"/>
</dbReference>
<dbReference type="EMBL" id="AC004812">
    <property type="protein sequence ID" value="AAC83181.1"/>
    <property type="status" value="ALT_SEQ"/>
    <property type="molecule type" value="Genomic_DNA"/>
</dbReference>
<dbReference type="EMBL" id="AC004815">
    <property type="status" value="NOT_ANNOTATED_CDS"/>
    <property type="molecule type" value="Genomic_DNA"/>
</dbReference>
<dbReference type="CCDS" id="CCDS41845.1">
    <molecule id="Q6ZP65-1"/>
</dbReference>
<dbReference type="RefSeq" id="NP_997194.2">
    <molecule id="Q6ZP65-1"/>
    <property type="nucleotide sequence ID" value="NM_207311.2"/>
</dbReference>
<dbReference type="SMR" id="Q6ZP65"/>
<dbReference type="BioGRID" id="124955">
    <property type="interactions" value="2"/>
</dbReference>
<dbReference type="FunCoup" id="Q6ZP65">
    <property type="interactions" value="102"/>
</dbReference>
<dbReference type="IntAct" id="Q6ZP65">
    <property type="interactions" value="2"/>
</dbReference>
<dbReference type="STRING" id="9606.ENSP00000380690"/>
<dbReference type="GlyGen" id="Q6ZP65">
    <property type="glycosylation" value="1 site, 1 O-linked glycan (1 site)"/>
</dbReference>
<dbReference type="iPTMnet" id="Q6ZP65"/>
<dbReference type="PhosphoSitePlus" id="Q6ZP65"/>
<dbReference type="BioMuta" id="BICDL1"/>
<dbReference type="DMDM" id="313104078"/>
<dbReference type="jPOST" id="Q6ZP65"/>
<dbReference type="MassIVE" id="Q6ZP65"/>
<dbReference type="PaxDb" id="9606-ENSP00000380690"/>
<dbReference type="PeptideAtlas" id="Q6ZP65"/>
<dbReference type="ProteomicsDB" id="5351"/>
<dbReference type="ProteomicsDB" id="68060">
    <molecule id="Q6ZP65-1"/>
</dbReference>
<dbReference type="Antibodypedia" id="62366">
    <property type="antibodies" value="20 antibodies from 7 providers"/>
</dbReference>
<dbReference type="DNASU" id="92558"/>
<dbReference type="Ensembl" id="ENST00000397558.6">
    <molecule id="Q6ZP65-1"/>
    <property type="protein sequence ID" value="ENSP00000380690.2"/>
    <property type="gene ID" value="ENSG00000135127.12"/>
</dbReference>
<dbReference type="GeneID" id="92558"/>
<dbReference type="KEGG" id="hsa:92558"/>
<dbReference type="UCSC" id="uc001txl.2">
    <molecule id="Q6ZP65-1"/>
    <property type="organism name" value="human"/>
</dbReference>
<dbReference type="AGR" id="HGNC:28095"/>
<dbReference type="CTD" id="92558"/>
<dbReference type="DisGeNET" id="92558"/>
<dbReference type="GeneCards" id="BICDL1"/>
<dbReference type="HGNC" id="HGNC:28095">
    <property type="gene designation" value="BICDL1"/>
</dbReference>
<dbReference type="HPA" id="ENSG00000135127">
    <property type="expression patterns" value="Tissue enhanced (kidney, pituitary gland)"/>
</dbReference>
<dbReference type="MIM" id="617002">
    <property type="type" value="gene"/>
</dbReference>
<dbReference type="neXtProt" id="NX_Q6ZP65"/>
<dbReference type="OpenTargets" id="ENSG00000135127"/>
<dbReference type="PharmGKB" id="PA143485416"/>
<dbReference type="VEuPathDB" id="HostDB:ENSG00000135127"/>
<dbReference type="eggNOG" id="ENOG502QUA9">
    <property type="taxonomic scope" value="Eukaryota"/>
</dbReference>
<dbReference type="GeneTree" id="ENSGT00940000157442"/>
<dbReference type="HOGENOM" id="CLU_029068_0_0_1"/>
<dbReference type="InParanoid" id="Q6ZP65"/>
<dbReference type="OMA" id="PRQFGQY"/>
<dbReference type="OrthoDB" id="9451547at2759"/>
<dbReference type="PAN-GO" id="Q6ZP65">
    <property type="GO annotations" value="2 GO annotations based on evolutionary models"/>
</dbReference>
<dbReference type="PhylomeDB" id="Q6ZP65"/>
<dbReference type="TreeFam" id="TF326671"/>
<dbReference type="PathwayCommons" id="Q6ZP65"/>
<dbReference type="SignaLink" id="Q6ZP65"/>
<dbReference type="SIGNOR" id="Q6ZP65"/>
<dbReference type="BioGRID-ORCS" id="92558">
    <property type="hits" value="15 hits in 1143 CRISPR screens"/>
</dbReference>
<dbReference type="ChiTaRS" id="BICDL1">
    <property type="organism name" value="human"/>
</dbReference>
<dbReference type="GenomeRNAi" id="92558"/>
<dbReference type="Pharos" id="Q6ZP65">
    <property type="development level" value="Tdark"/>
</dbReference>
<dbReference type="PRO" id="PR:Q6ZP65"/>
<dbReference type="Proteomes" id="UP000005640">
    <property type="component" value="Chromosome 12"/>
</dbReference>
<dbReference type="RNAct" id="Q6ZP65">
    <property type="molecule type" value="protein"/>
</dbReference>
<dbReference type="Bgee" id="ENSG00000135127">
    <property type="expression patterns" value="Expressed in metanephros cortex and 160 other cell types or tissues"/>
</dbReference>
<dbReference type="ExpressionAtlas" id="Q6ZP65">
    <property type="expression patterns" value="baseline and differential"/>
</dbReference>
<dbReference type="GO" id="GO:0005813">
    <property type="term" value="C:centrosome"/>
    <property type="evidence" value="ECO:0000250"/>
    <property type="project" value="UniProtKB"/>
</dbReference>
<dbReference type="GO" id="GO:0005737">
    <property type="term" value="C:cytoplasm"/>
    <property type="evidence" value="ECO:0007669"/>
    <property type="project" value="UniProtKB-KW"/>
</dbReference>
<dbReference type="GO" id="GO:0034452">
    <property type="term" value="F:dynactin binding"/>
    <property type="evidence" value="ECO:0000250"/>
    <property type="project" value="UniProtKB"/>
</dbReference>
<dbReference type="GO" id="GO:0031267">
    <property type="term" value="F:small GTPase binding"/>
    <property type="evidence" value="ECO:0000250"/>
    <property type="project" value="UniProtKB"/>
</dbReference>
<dbReference type="GO" id="GO:0055107">
    <property type="term" value="P:Golgi to secretory granule transport"/>
    <property type="evidence" value="ECO:0000250"/>
    <property type="project" value="UniProtKB"/>
</dbReference>
<dbReference type="GO" id="GO:0031175">
    <property type="term" value="P:neuron projection development"/>
    <property type="evidence" value="ECO:0000250"/>
    <property type="project" value="UniProtKB"/>
</dbReference>
<dbReference type="GO" id="GO:0047496">
    <property type="term" value="P:vesicle transport along microtubule"/>
    <property type="evidence" value="ECO:0000318"/>
    <property type="project" value="GO_Central"/>
</dbReference>
<dbReference type="InterPro" id="IPR051149">
    <property type="entry name" value="Spindly/BICDR_Dynein_Adapter"/>
</dbReference>
<dbReference type="PANTHER" id="PTHR32123">
    <property type="entry name" value="BICD FAMILY-LIKE CARGO ADAPTER"/>
    <property type="match status" value="1"/>
</dbReference>
<dbReference type="PANTHER" id="PTHR32123:SF12">
    <property type="entry name" value="BICD FAMILY-LIKE CARGO ADAPTER 1"/>
    <property type="match status" value="1"/>
</dbReference>
<evidence type="ECO:0000250" key="1">
    <source>
        <dbReference type="UniProtKB" id="A0JNT9"/>
    </source>
</evidence>
<evidence type="ECO:0000255" key="2"/>
<evidence type="ECO:0000256" key="3">
    <source>
        <dbReference type="SAM" id="MobiDB-lite"/>
    </source>
</evidence>
<evidence type="ECO:0000303" key="4">
    <source>
    </source>
</evidence>
<evidence type="ECO:0000305" key="5"/>
<name>BICL1_HUMAN</name>
<protein>
    <recommendedName>
        <fullName>BICD family-like cargo adapter 1</fullName>
    </recommendedName>
    <alternativeName>
        <fullName>Bicaudal D-related protein 1</fullName>
        <shortName>BICD-related protein 1</shortName>
        <shortName>BICDR-1</shortName>
    </alternativeName>
    <alternativeName>
        <fullName>Coiled-coil domain-containing protein 64A</fullName>
        <shortName>CCDC64A</shortName>
    </alternativeName>
</protein>
<feature type="chain" id="PRO_0000302858" description="BICD family-like cargo adapter 1">
    <location>
        <begin position="1"/>
        <end position="573"/>
    </location>
</feature>
<feature type="region of interest" description="Disordered" evidence="3">
    <location>
        <begin position="67"/>
        <end position="97"/>
    </location>
</feature>
<feature type="region of interest" description="Disordered" evidence="3">
    <location>
        <begin position="386"/>
        <end position="412"/>
    </location>
</feature>
<feature type="coiled-coil region" evidence="2">
    <location>
        <begin position="118"/>
        <end position="376"/>
    </location>
</feature>
<feature type="coiled-coil region" evidence="2">
    <location>
        <begin position="440"/>
        <end position="525"/>
    </location>
</feature>
<feature type="short sequence motif" description="CC1 box" evidence="1">
    <location>
        <begin position="113"/>
        <end position="117"/>
    </location>
</feature>
<feature type="compositionally biased region" description="Basic and acidic residues" evidence="3">
    <location>
        <begin position="68"/>
        <end position="77"/>
    </location>
</feature>
<feature type="compositionally biased region" description="Low complexity" evidence="3">
    <location>
        <begin position="387"/>
        <end position="396"/>
    </location>
</feature>
<feature type="splice variant" id="VSP_056941" description="In isoform 2." evidence="4">
    <location>
        <begin position="1"/>
        <end position="351"/>
    </location>
</feature>
<feature type="splice variant" id="VSP_056942" description="In isoform 2." evidence="4">
    <original>T</original>
    <variation>TGSRRLDDDSLEEQIRQTSEDSRALRELMEGERGKLRQSLEELQRLHSQ</variation>
    <location>
        <position position="436"/>
    </location>
</feature>
<feature type="sequence conflict" description="In Ref. 1; BAC85259." evidence="5" ref="1">
    <location>
        <begin position="79"/>
        <end position="97"/>
    </location>
</feature>
<reference key="1">
    <citation type="journal article" date="2004" name="Nat. Genet.">
        <title>Complete sequencing and characterization of 21,243 full-length human cDNAs.</title>
        <authorList>
            <person name="Ota T."/>
            <person name="Suzuki Y."/>
            <person name="Nishikawa T."/>
            <person name="Otsuki T."/>
            <person name="Sugiyama T."/>
            <person name="Irie R."/>
            <person name="Wakamatsu A."/>
            <person name="Hayashi K."/>
            <person name="Sato H."/>
            <person name="Nagai K."/>
            <person name="Kimura K."/>
            <person name="Makita H."/>
            <person name="Sekine M."/>
            <person name="Obayashi M."/>
            <person name="Nishi T."/>
            <person name="Shibahara T."/>
            <person name="Tanaka T."/>
            <person name="Ishii S."/>
            <person name="Yamamoto J."/>
            <person name="Saito K."/>
            <person name="Kawai Y."/>
            <person name="Isono Y."/>
            <person name="Nakamura Y."/>
            <person name="Nagahari K."/>
            <person name="Murakami K."/>
            <person name="Yasuda T."/>
            <person name="Iwayanagi T."/>
            <person name="Wagatsuma M."/>
            <person name="Shiratori A."/>
            <person name="Sudo H."/>
            <person name="Hosoiri T."/>
            <person name="Kaku Y."/>
            <person name="Kodaira H."/>
            <person name="Kondo H."/>
            <person name="Sugawara M."/>
            <person name="Takahashi M."/>
            <person name="Kanda K."/>
            <person name="Yokoi T."/>
            <person name="Furuya T."/>
            <person name="Kikkawa E."/>
            <person name="Omura Y."/>
            <person name="Abe K."/>
            <person name="Kamihara K."/>
            <person name="Katsuta N."/>
            <person name="Sato K."/>
            <person name="Tanikawa M."/>
            <person name="Yamazaki M."/>
            <person name="Ninomiya K."/>
            <person name="Ishibashi T."/>
            <person name="Yamashita H."/>
            <person name="Murakawa K."/>
            <person name="Fujimori K."/>
            <person name="Tanai H."/>
            <person name="Kimata M."/>
            <person name="Watanabe M."/>
            <person name="Hiraoka S."/>
            <person name="Chiba Y."/>
            <person name="Ishida S."/>
            <person name="Ono Y."/>
            <person name="Takiguchi S."/>
            <person name="Watanabe S."/>
            <person name="Yosida M."/>
            <person name="Hotuta T."/>
            <person name="Kusano J."/>
            <person name="Kanehori K."/>
            <person name="Takahashi-Fujii A."/>
            <person name="Hara H."/>
            <person name="Tanase T.-O."/>
            <person name="Nomura Y."/>
            <person name="Togiya S."/>
            <person name="Komai F."/>
            <person name="Hara R."/>
            <person name="Takeuchi K."/>
            <person name="Arita M."/>
            <person name="Imose N."/>
            <person name="Musashino K."/>
            <person name="Yuuki H."/>
            <person name="Oshima A."/>
            <person name="Sasaki N."/>
            <person name="Aotsuka S."/>
            <person name="Yoshikawa Y."/>
            <person name="Matsunawa H."/>
            <person name="Ichihara T."/>
            <person name="Shiohata N."/>
            <person name="Sano S."/>
            <person name="Moriya S."/>
            <person name="Momiyama H."/>
            <person name="Satoh N."/>
            <person name="Takami S."/>
            <person name="Terashima Y."/>
            <person name="Suzuki O."/>
            <person name="Nakagawa S."/>
            <person name="Senoh A."/>
            <person name="Mizoguchi H."/>
            <person name="Goto Y."/>
            <person name="Shimizu F."/>
            <person name="Wakebe H."/>
            <person name="Hishigaki H."/>
            <person name="Watanabe T."/>
            <person name="Sugiyama A."/>
            <person name="Takemoto M."/>
            <person name="Kawakami B."/>
            <person name="Yamazaki M."/>
            <person name="Watanabe K."/>
            <person name="Kumagai A."/>
            <person name="Itakura S."/>
            <person name="Fukuzumi Y."/>
            <person name="Fujimori Y."/>
            <person name="Komiyama M."/>
            <person name="Tashiro H."/>
            <person name="Tanigami A."/>
            <person name="Fujiwara T."/>
            <person name="Ono T."/>
            <person name="Yamada K."/>
            <person name="Fujii Y."/>
            <person name="Ozaki K."/>
            <person name="Hirao M."/>
            <person name="Ohmori Y."/>
            <person name="Kawabata A."/>
            <person name="Hikiji T."/>
            <person name="Kobatake N."/>
            <person name="Inagaki H."/>
            <person name="Ikema Y."/>
            <person name="Okamoto S."/>
            <person name="Okitani R."/>
            <person name="Kawakami T."/>
            <person name="Noguchi S."/>
            <person name="Itoh T."/>
            <person name="Shigeta K."/>
            <person name="Senba T."/>
            <person name="Matsumura K."/>
            <person name="Nakajima Y."/>
            <person name="Mizuno T."/>
            <person name="Morinaga M."/>
            <person name="Sasaki M."/>
            <person name="Togashi T."/>
            <person name="Oyama M."/>
            <person name="Hata H."/>
            <person name="Watanabe M."/>
            <person name="Komatsu T."/>
            <person name="Mizushima-Sugano J."/>
            <person name="Satoh T."/>
            <person name="Shirai Y."/>
            <person name="Takahashi Y."/>
            <person name="Nakagawa K."/>
            <person name="Okumura K."/>
            <person name="Nagase T."/>
            <person name="Nomura N."/>
            <person name="Kikuchi H."/>
            <person name="Masuho Y."/>
            <person name="Yamashita R."/>
            <person name="Nakai K."/>
            <person name="Yada T."/>
            <person name="Nakamura Y."/>
            <person name="Ohara O."/>
            <person name="Isogai T."/>
            <person name="Sugano S."/>
        </authorList>
    </citation>
    <scope>NUCLEOTIDE SEQUENCE [LARGE SCALE MRNA] (ISOFORMS 1 AND 2)</scope>
    <source>
        <tissue>Kidney</tissue>
        <tissue>Mammary gland</tissue>
    </source>
</reference>
<reference key="2">
    <citation type="journal article" date="2006" name="Nature">
        <title>The finished DNA sequence of human chromosome 12.</title>
        <authorList>
            <person name="Scherer S.E."/>
            <person name="Muzny D.M."/>
            <person name="Buhay C.J."/>
            <person name="Chen R."/>
            <person name="Cree A."/>
            <person name="Ding Y."/>
            <person name="Dugan-Rocha S."/>
            <person name="Gill R."/>
            <person name="Gunaratne P."/>
            <person name="Harris R.A."/>
            <person name="Hawes A.C."/>
            <person name="Hernandez J."/>
            <person name="Hodgson A.V."/>
            <person name="Hume J."/>
            <person name="Jackson A."/>
            <person name="Khan Z.M."/>
            <person name="Kovar-Smith C."/>
            <person name="Lewis L.R."/>
            <person name="Lozado R.J."/>
            <person name="Metzker M.L."/>
            <person name="Milosavljevic A."/>
            <person name="Miner G.R."/>
            <person name="Montgomery K.T."/>
            <person name="Morgan M.B."/>
            <person name="Nazareth L.V."/>
            <person name="Scott G."/>
            <person name="Sodergren E."/>
            <person name="Song X.-Z."/>
            <person name="Steffen D."/>
            <person name="Lovering R.C."/>
            <person name="Wheeler D.A."/>
            <person name="Worley K.C."/>
            <person name="Yuan Y."/>
            <person name="Zhang Z."/>
            <person name="Adams C.Q."/>
            <person name="Ansari-Lari M.A."/>
            <person name="Ayele M."/>
            <person name="Brown M.J."/>
            <person name="Chen G."/>
            <person name="Chen Z."/>
            <person name="Clerc-Blankenburg K.P."/>
            <person name="Davis C."/>
            <person name="Delgado O."/>
            <person name="Dinh H.H."/>
            <person name="Draper H."/>
            <person name="Gonzalez-Garay M.L."/>
            <person name="Havlak P."/>
            <person name="Jackson L.R."/>
            <person name="Jacob L.S."/>
            <person name="Kelly S.H."/>
            <person name="Li L."/>
            <person name="Li Z."/>
            <person name="Liu J."/>
            <person name="Liu W."/>
            <person name="Lu J."/>
            <person name="Maheshwari M."/>
            <person name="Nguyen B.-V."/>
            <person name="Okwuonu G.O."/>
            <person name="Pasternak S."/>
            <person name="Perez L.M."/>
            <person name="Plopper F.J.H."/>
            <person name="Santibanez J."/>
            <person name="Shen H."/>
            <person name="Tabor P.E."/>
            <person name="Verduzco D."/>
            <person name="Waldron L."/>
            <person name="Wang Q."/>
            <person name="Williams G.A."/>
            <person name="Zhang J."/>
            <person name="Zhou J."/>
            <person name="Allen C.C."/>
            <person name="Amin A.G."/>
            <person name="Anyalebechi V."/>
            <person name="Bailey M."/>
            <person name="Barbaria J.A."/>
            <person name="Bimage K.E."/>
            <person name="Bryant N.P."/>
            <person name="Burch P.E."/>
            <person name="Burkett C.E."/>
            <person name="Burrell K.L."/>
            <person name="Calderon E."/>
            <person name="Cardenas V."/>
            <person name="Carter K."/>
            <person name="Casias K."/>
            <person name="Cavazos I."/>
            <person name="Cavazos S.R."/>
            <person name="Ceasar H."/>
            <person name="Chacko J."/>
            <person name="Chan S.N."/>
            <person name="Chavez D."/>
            <person name="Christopoulos C."/>
            <person name="Chu J."/>
            <person name="Cockrell R."/>
            <person name="Cox C.D."/>
            <person name="Dang M."/>
            <person name="Dathorne S.R."/>
            <person name="David R."/>
            <person name="Davis C.M."/>
            <person name="Davy-Carroll L."/>
            <person name="Deshazo D.R."/>
            <person name="Donlin J.E."/>
            <person name="D'Souza L."/>
            <person name="Eaves K.A."/>
            <person name="Egan A."/>
            <person name="Emery-Cohen A.J."/>
            <person name="Escotto M."/>
            <person name="Flagg N."/>
            <person name="Forbes L.D."/>
            <person name="Gabisi A.M."/>
            <person name="Garza M."/>
            <person name="Hamilton C."/>
            <person name="Henderson N."/>
            <person name="Hernandez O."/>
            <person name="Hines S."/>
            <person name="Hogues M.E."/>
            <person name="Huang M."/>
            <person name="Idlebird D.G."/>
            <person name="Johnson R."/>
            <person name="Jolivet A."/>
            <person name="Jones S."/>
            <person name="Kagan R."/>
            <person name="King L.M."/>
            <person name="Leal B."/>
            <person name="Lebow H."/>
            <person name="Lee S."/>
            <person name="LeVan J.M."/>
            <person name="Lewis L.C."/>
            <person name="London P."/>
            <person name="Lorensuhewa L.M."/>
            <person name="Loulseged H."/>
            <person name="Lovett D.A."/>
            <person name="Lucier A."/>
            <person name="Lucier R.L."/>
            <person name="Ma J."/>
            <person name="Madu R.C."/>
            <person name="Mapua P."/>
            <person name="Martindale A.D."/>
            <person name="Martinez E."/>
            <person name="Massey E."/>
            <person name="Mawhiney S."/>
            <person name="Meador M.G."/>
            <person name="Mendez S."/>
            <person name="Mercado C."/>
            <person name="Mercado I.C."/>
            <person name="Merritt C.E."/>
            <person name="Miner Z.L."/>
            <person name="Minja E."/>
            <person name="Mitchell T."/>
            <person name="Mohabbat F."/>
            <person name="Mohabbat K."/>
            <person name="Montgomery B."/>
            <person name="Moore N."/>
            <person name="Morris S."/>
            <person name="Munidasa M."/>
            <person name="Ngo R.N."/>
            <person name="Nguyen N.B."/>
            <person name="Nickerson E."/>
            <person name="Nwaokelemeh O.O."/>
            <person name="Nwokenkwo S."/>
            <person name="Obregon M."/>
            <person name="Oguh M."/>
            <person name="Oragunye N."/>
            <person name="Oviedo R.J."/>
            <person name="Parish B.J."/>
            <person name="Parker D.N."/>
            <person name="Parrish J."/>
            <person name="Parks K.L."/>
            <person name="Paul H.A."/>
            <person name="Payton B.A."/>
            <person name="Perez A."/>
            <person name="Perrin W."/>
            <person name="Pickens A."/>
            <person name="Primus E.L."/>
            <person name="Pu L.-L."/>
            <person name="Puazo M."/>
            <person name="Quiles M.M."/>
            <person name="Quiroz J.B."/>
            <person name="Rabata D."/>
            <person name="Reeves K."/>
            <person name="Ruiz S.J."/>
            <person name="Shao H."/>
            <person name="Sisson I."/>
            <person name="Sonaike T."/>
            <person name="Sorelle R.P."/>
            <person name="Sutton A.E."/>
            <person name="Svatek A.F."/>
            <person name="Svetz L.A."/>
            <person name="Tamerisa K.S."/>
            <person name="Taylor T.R."/>
            <person name="Teague B."/>
            <person name="Thomas N."/>
            <person name="Thorn R.D."/>
            <person name="Trejos Z.Y."/>
            <person name="Trevino B.K."/>
            <person name="Ukegbu O.N."/>
            <person name="Urban J.B."/>
            <person name="Vasquez L.I."/>
            <person name="Vera V.A."/>
            <person name="Villasana D.M."/>
            <person name="Wang L."/>
            <person name="Ward-Moore S."/>
            <person name="Warren J.T."/>
            <person name="Wei X."/>
            <person name="White F."/>
            <person name="Williamson A.L."/>
            <person name="Wleczyk R."/>
            <person name="Wooden H.S."/>
            <person name="Wooden S.H."/>
            <person name="Yen J."/>
            <person name="Yoon L."/>
            <person name="Yoon V."/>
            <person name="Zorrilla S.E."/>
            <person name="Nelson D."/>
            <person name="Kucherlapati R."/>
            <person name="Weinstock G."/>
            <person name="Gibbs R.A."/>
        </authorList>
    </citation>
    <scope>NUCLEOTIDE SEQUENCE [LARGE SCALE GENOMIC DNA]</scope>
</reference>
<keyword id="KW-0025">Alternative splicing</keyword>
<keyword id="KW-0175">Coiled coil</keyword>
<keyword id="KW-0963">Cytoplasm</keyword>
<keyword id="KW-0206">Cytoskeleton</keyword>
<keyword id="KW-0524">Neurogenesis</keyword>
<keyword id="KW-1267">Proteomics identification</keyword>
<keyword id="KW-1185">Reference proteome</keyword>
<keyword id="KW-0813">Transport</keyword>
<organism>
    <name type="scientific">Homo sapiens</name>
    <name type="common">Human</name>
    <dbReference type="NCBI Taxonomy" id="9606"/>
    <lineage>
        <taxon>Eukaryota</taxon>
        <taxon>Metazoa</taxon>
        <taxon>Chordata</taxon>
        <taxon>Craniata</taxon>
        <taxon>Vertebrata</taxon>
        <taxon>Euteleostomi</taxon>
        <taxon>Mammalia</taxon>
        <taxon>Eutheria</taxon>
        <taxon>Euarchontoglires</taxon>
        <taxon>Primates</taxon>
        <taxon>Haplorrhini</taxon>
        <taxon>Catarrhini</taxon>
        <taxon>Hominidae</taxon>
        <taxon>Homo</taxon>
    </lineage>
</organism>
<proteinExistence type="evidence at protein level"/>